<dbReference type="EC" id="1.2.1.41" evidence="1"/>
<dbReference type="EMBL" id="CP001364">
    <property type="protein sequence ID" value="ACM53163.1"/>
    <property type="molecule type" value="Genomic_DNA"/>
</dbReference>
<dbReference type="SMR" id="B9LE47"/>
<dbReference type="KEGG" id="chl:Chy400_1753"/>
<dbReference type="HOGENOM" id="CLU_030231_0_0_0"/>
<dbReference type="OrthoDB" id="9809970at2"/>
<dbReference type="UniPathway" id="UPA00098">
    <property type="reaction ID" value="UER00360"/>
</dbReference>
<dbReference type="GO" id="GO:0005737">
    <property type="term" value="C:cytoplasm"/>
    <property type="evidence" value="ECO:0007669"/>
    <property type="project" value="UniProtKB-SubCell"/>
</dbReference>
<dbReference type="GO" id="GO:0004350">
    <property type="term" value="F:glutamate-5-semialdehyde dehydrogenase activity"/>
    <property type="evidence" value="ECO:0007669"/>
    <property type="project" value="UniProtKB-UniRule"/>
</dbReference>
<dbReference type="GO" id="GO:0050661">
    <property type="term" value="F:NADP binding"/>
    <property type="evidence" value="ECO:0007669"/>
    <property type="project" value="InterPro"/>
</dbReference>
<dbReference type="GO" id="GO:0055129">
    <property type="term" value="P:L-proline biosynthetic process"/>
    <property type="evidence" value="ECO:0007669"/>
    <property type="project" value="UniProtKB-UniRule"/>
</dbReference>
<dbReference type="CDD" id="cd07079">
    <property type="entry name" value="ALDH_F18-19_ProA-GPR"/>
    <property type="match status" value="1"/>
</dbReference>
<dbReference type="FunFam" id="3.40.309.10:FF:000006">
    <property type="entry name" value="Gamma-glutamyl phosphate reductase"/>
    <property type="match status" value="1"/>
</dbReference>
<dbReference type="Gene3D" id="3.40.605.10">
    <property type="entry name" value="Aldehyde Dehydrogenase, Chain A, domain 1"/>
    <property type="match status" value="1"/>
</dbReference>
<dbReference type="Gene3D" id="3.40.309.10">
    <property type="entry name" value="Aldehyde Dehydrogenase, Chain A, domain 2"/>
    <property type="match status" value="1"/>
</dbReference>
<dbReference type="HAMAP" id="MF_00412">
    <property type="entry name" value="ProA"/>
    <property type="match status" value="1"/>
</dbReference>
<dbReference type="InterPro" id="IPR016161">
    <property type="entry name" value="Ald_DH/histidinol_DH"/>
</dbReference>
<dbReference type="InterPro" id="IPR016163">
    <property type="entry name" value="Ald_DH_C"/>
</dbReference>
<dbReference type="InterPro" id="IPR016162">
    <property type="entry name" value="Ald_DH_N"/>
</dbReference>
<dbReference type="InterPro" id="IPR015590">
    <property type="entry name" value="Aldehyde_DH_dom"/>
</dbReference>
<dbReference type="InterPro" id="IPR020593">
    <property type="entry name" value="G-glutamylP_reductase_CS"/>
</dbReference>
<dbReference type="InterPro" id="IPR012134">
    <property type="entry name" value="Glu-5-SA_DH"/>
</dbReference>
<dbReference type="InterPro" id="IPR000965">
    <property type="entry name" value="GPR_dom"/>
</dbReference>
<dbReference type="NCBIfam" id="NF001221">
    <property type="entry name" value="PRK00197.1"/>
    <property type="match status" value="1"/>
</dbReference>
<dbReference type="NCBIfam" id="TIGR00407">
    <property type="entry name" value="proA"/>
    <property type="match status" value="1"/>
</dbReference>
<dbReference type="PANTHER" id="PTHR11063:SF8">
    <property type="entry name" value="DELTA-1-PYRROLINE-5-CARBOXYLATE SYNTHASE"/>
    <property type="match status" value="1"/>
</dbReference>
<dbReference type="PANTHER" id="PTHR11063">
    <property type="entry name" value="GLUTAMATE SEMIALDEHYDE DEHYDROGENASE"/>
    <property type="match status" value="1"/>
</dbReference>
<dbReference type="Pfam" id="PF00171">
    <property type="entry name" value="Aldedh"/>
    <property type="match status" value="1"/>
</dbReference>
<dbReference type="PIRSF" id="PIRSF000151">
    <property type="entry name" value="GPR"/>
    <property type="match status" value="1"/>
</dbReference>
<dbReference type="SUPFAM" id="SSF53720">
    <property type="entry name" value="ALDH-like"/>
    <property type="match status" value="1"/>
</dbReference>
<dbReference type="PROSITE" id="PS01223">
    <property type="entry name" value="PROA"/>
    <property type="match status" value="1"/>
</dbReference>
<keyword id="KW-0028">Amino-acid biosynthesis</keyword>
<keyword id="KW-0963">Cytoplasm</keyword>
<keyword id="KW-0521">NADP</keyword>
<keyword id="KW-0560">Oxidoreductase</keyword>
<keyword id="KW-0641">Proline biosynthesis</keyword>
<proteinExistence type="inferred from homology"/>
<comment type="function">
    <text evidence="1">Catalyzes the NADPH-dependent reduction of L-glutamate 5-phosphate into L-glutamate 5-semialdehyde and phosphate. The product spontaneously undergoes cyclization to form 1-pyrroline-5-carboxylate.</text>
</comment>
<comment type="catalytic activity">
    <reaction evidence="1">
        <text>L-glutamate 5-semialdehyde + phosphate + NADP(+) = L-glutamyl 5-phosphate + NADPH + H(+)</text>
        <dbReference type="Rhea" id="RHEA:19541"/>
        <dbReference type="ChEBI" id="CHEBI:15378"/>
        <dbReference type="ChEBI" id="CHEBI:43474"/>
        <dbReference type="ChEBI" id="CHEBI:57783"/>
        <dbReference type="ChEBI" id="CHEBI:58066"/>
        <dbReference type="ChEBI" id="CHEBI:58274"/>
        <dbReference type="ChEBI" id="CHEBI:58349"/>
        <dbReference type="EC" id="1.2.1.41"/>
    </reaction>
</comment>
<comment type="pathway">
    <text evidence="1">Amino-acid biosynthesis; L-proline biosynthesis; L-glutamate 5-semialdehyde from L-glutamate: step 2/2.</text>
</comment>
<comment type="subcellular location">
    <subcellularLocation>
        <location evidence="1">Cytoplasm</location>
    </subcellularLocation>
</comment>
<comment type="similarity">
    <text evidence="1">Belongs to the gamma-glutamyl phosphate reductase family.</text>
</comment>
<evidence type="ECO:0000255" key="1">
    <source>
        <dbReference type="HAMAP-Rule" id="MF_00412"/>
    </source>
</evidence>
<gene>
    <name evidence="1" type="primary">proA</name>
    <name type="ordered locus">Chy400_1753</name>
</gene>
<protein>
    <recommendedName>
        <fullName evidence="1">Gamma-glutamyl phosphate reductase</fullName>
        <shortName evidence="1">GPR</shortName>
        <ecNumber evidence="1">1.2.1.41</ecNumber>
    </recommendedName>
    <alternativeName>
        <fullName evidence="1">Glutamate-5-semialdehyde dehydrogenase</fullName>
    </alternativeName>
    <alternativeName>
        <fullName evidence="1">Glutamyl-gamma-semialdehyde dehydrogenase</fullName>
        <shortName evidence="1">GSA dehydrogenase</shortName>
    </alternativeName>
</protein>
<reference key="1">
    <citation type="submission" date="2009-01" db="EMBL/GenBank/DDBJ databases">
        <title>Complete sequence of Chloroflexus sp. Y-400-fl.</title>
        <authorList>
            <consortium name="US DOE Joint Genome Institute"/>
            <person name="Lucas S."/>
            <person name="Copeland A."/>
            <person name="Lapidus A."/>
            <person name="Glavina del Rio T."/>
            <person name="Dalin E."/>
            <person name="Tice H."/>
            <person name="Bruce D."/>
            <person name="Goodwin L."/>
            <person name="Pitluck S."/>
            <person name="Sims D."/>
            <person name="Kiss H."/>
            <person name="Brettin T."/>
            <person name="Detter J.C."/>
            <person name="Han C."/>
            <person name="Larimer F."/>
            <person name="Land M."/>
            <person name="Hauser L."/>
            <person name="Kyrpides N."/>
            <person name="Ovchinnikova G."/>
            <person name="Bryant D.A."/>
            <person name="Richardson P."/>
        </authorList>
    </citation>
    <scope>NUCLEOTIDE SEQUENCE [LARGE SCALE GENOMIC DNA]</scope>
    <source>
        <strain>ATCC 29364 / DSM 637 / Y-400-fl</strain>
    </source>
</reference>
<feature type="chain" id="PRO_1000193586" description="Gamma-glutamyl phosphate reductase">
    <location>
        <begin position="1"/>
        <end position="422"/>
    </location>
</feature>
<sequence>MVDLEAIGRRAKTAARALAKLSTEQKNAALCAIADGLLARQDKILAANAADVADAEKGGTPPAIVDRMLLTPARLAAIAGDCRQVASLPDPVGEIFDRRELPSGLRLYKRRVPIGVIGAIYEARPNVTVDIASLCLKAGNAVILRGGSDIARSVAATTEVIALALEQAGLPAFAVQSIIDPDRELVRQLLRLDRYVDMIIPRGGAGLHRFCVENATVPVIVGGMGVSHIYVEPSADFARAVPVIVNAKVQRPGACNALDTLLVHRAAASTFLPLVAAALAQHGVELRCDLEALAILADAPGHEAWNLKPASPTDFGCEFLALIVAIKIVGSIDEALDHIALYGGHSEAILTGDPISAERFTREVDATAVFVNASTRFNDGGQFGLGAEVAISTNRLHARGPMGLQELTTYTWIGEGDYLVRA</sequence>
<name>PROA_CHLSY</name>
<organism>
    <name type="scientific">Chloroflexus aurantiacus (strain ATCC 29364 / DSM 637 / Y-400-fl)</name>
    <dbReference type="NCBI Taxonomy" id="480224"/>
    <lineage>
        <taxon>Bacteria</taxon>
        <taxon>Bacillati</taxon>
        <taxon>Chloroflexota</taxon>
        <taxon>Chloroflexia</taxon>
        <taxon>Chloroflexales</taxon>
        <taxon>Chloroflexineae</taxon>
        <taxon>Chloroflexaceae</taxon>
        <taxon>Chloroflexus</taxon>
    </lineage>
</organism>
<accession>B9LE47</accession>